<dbReference type="EMBL" id="Y11994">
    <property type="protein sequence ID" value="CAA72719.1"/>
    <property type="status" value="ALT_FRAME"/>
    <property type="molecule type" value="mRNA"/>
</dbReference>
<dbReference type="EMBL" id="AC004747">
    <property type="protein sequence ID" value="AAC31242.1"/>
    <property type="molecule type" value="Genomic_DNA"/>
</dbReference>
<dbReference type="EMBL" id="AC005395">
    <property type="protein sequence ID" value="AAM15042.1"/>
    <property type="molecule type" value="Genomic_DNA"/>
</dbReference>
<dbReference type="EMBL" id="CP002685">
    <property type="protein sequence ID" value="AEC07774.1"/>
    <property type="molecule type" value="Genomic_DNA"/>
</dbReference>
<dbReference type="EMBL" id="AY136385">
    <property type="protein sequence ID" value="AAM97051.1"/>
    <property type="molecule type" value="mRNA"/>
</dbReference>
<dbReference type="EMBL" id="BT000185">
    <property type="protein sequence ID" value="AAN15504.1"/>
    <property type="molecule type" value="mRNA"/>
</dbReference>
<dbReference type="PIR" id="T02630">
    <property type="entry name" value="T02630"/>
</dbReference>
<dbReference type="PIR" id="T52634">
    <property type="entry name" value="T52634"/>
</dbReference>
<dbReference type="RefSeq" id="NP_180164.1">
    <molecule id="O82804-1"/>
    <property type="nucleotide sequence ID" value="NM_128153.3"/>
</dbReference>
<dbReference type="BioGRID" id="2486">
    <property type="interactions" value="41"/>
</dbReference>
<dbReference type="ComplexPortal" id="CPX-1291">
    <property type="entry name" value="Evening Complex"/>
</dbReference>
<dbReference type="FunCoup" id="O82804">
    <property type="interactions" value="299"/>
</dbReference>
<dbReference type="IntAct" id="O82804">
    <property type="interactions" value="16"/>
</dbReference>
<dbReference type="STRING" id="3702.O82804"/>
<dbReference type="PaxDb" id="3702-AT2G25930.1"/>
<dbReference type="ProteomicsDB" id="221941">
    <molecule id="O82804-1"/>
</dbReference>
<dbReference type="EnsemblPlants" id="AT2G25930.1">
    <molecule id="O82804-1"/>
    <property type="protein sequence ID" value="AT2G25930.1"/>
    <property type="gene ID" value="AT2G25930"/>
</dbReference>
<dbReference type="GeneID" id="817134"/>
<dbReference type="Gramene" id="AT2G25930.1">
    <molecule id="O82804-1"/>
    <property type="protein sequence ID" value="AT2G25930.1"/>
    <property type="gene ID" value="AT2G25930"/>
</dbReference>
<dbReference type="KEGG" id="ath:AT2G25930"/>
<dbReference type="Araport" id="AT2G25930"/>
<dbReference type="TAIR" id="AT2G25930">
    <property type="gene designation" value="ELF3"/>
</dbReference>
<dbReference type="eggNOG" id="ENOG502QSB6">
    <property type="taxonomic scope" value="Eukaryota"/>
</dbReference>
<dbReference type="HOGENOM" id="CLU_027835_1_0_1"/>
<dbReference type="InParanoid" id="O82804"/>
<dbReference type="OMA" id="MECNAEN"/>
<dbReference type="PhylomeDB" id="O82804"/>
<dbReference type="CD-CODE" id="9A8A194B">
    <property type="entry name" value="Nuclear speckle"/>
</dbReference>
<dbReference type="PRO" id="PR:O82804"/>
<dbReference type="Proteomes" id="UP000006548">
    <property type="component" value="Chromosome 2"/>
</dbReference>
<dbReference type="ExpressionAtlas" id="O82804">
    <property type="expression patterns" value="baseline and differential"/>
</dbReference>
<dbReference type="GO" id="GO:0005634">
    <property type="term" value="C:nucleus"/>
    <property type="evidence" value="ECO:0000314"/>
    <property type="project" value="TAIR"/>
</dbReference>
<dbReference type="GO" id="GO:0005667">
    <property type="term" value="C:transcription regulator complex"/>
    <property type="evidence" value="ECO:0000314"/>
    <property type="project" value="ComplexPortal"/>
</dbReference>
<dbReference type="GO" id="GO:0003700">
    <property type="term" value="F:DNA-binding transcription factor activity"/>
    <property type="evidence" value="ECO:0000250"/>
    <property type="project" value="TAIR"/>
</dbReference>
<dbReference type="GO" id="GO:0007623">
    <property type="term" value="P:circadian rhythm"/>
    <property type="evidence" value="ECO:0000315"/>
    <property type="project" value="TAIR"/>
</dbReference>
<dbReference type="GO" id="GO:0010031">
    <property type="term" value="P:circumnutation"/>
    <property type="evidence" value="ECO:0000315"/>
    <property type="project" value="TAIR"/>
</dbReference>
<dbReference type="GO" id="GO:0009649">
    <property type="term" value="P:entrainment of circadian clock"/>
    <property type="evidence" value="ECO:0000315"/>
    <property type="project" value="TAIR"/>
</dbReference>
<dbReference type="GO" id="GO:0000122">
    <property type="term" value="P:negative regulation of transcription by RNA polymerase II"/>
    <property type="evidence" value="ECO:0000314"/>
    <property type="project" value="ComplexPortal"/>
</dbReference>
<dbReference type="GO" id="GO:0048573">
    <property type="term" value="P:photoperiodism, flowering"/>
    <property type="evidence" value="ECO:0000315"/>
    <property type="project" value="TAIR"/>
</dbReference>
<dbReference type="GO" id="GO:0009585">
    <property type="term" value="P:red, far-red light phototransduction"/>
    <property type="evidence" value="ECO:0000315"/>
    <property type="project" value="TAIR"/>
</dbReference>
<dbReference type="GO" id="GO:0042752">
    <property type="term" value="P:regulation of circadian rhythm"/>
    <property type="evidence" value="ECO:0000314"/>
    <property type="project" value="ComplexPortal"/>
</dbReference>
<dbReference type="GO" id="GO:0009909">
    <property type="term" value="P:regulation of flower development"/>
    <property type="evidence" value="ECO:0000315"/>
    <property type="project" value="TAIR"/>
</dbReference>
<dbReference type="GO" id="GO:2000028">
    <property type="term" value="P:regulation of photoperiodism, flowering"/>
    <property type="evidence" value="ECO:0007669"/>
    <property type="project" value="InterPro"/>
</dbReference>
<dbReference type="GO" id="GO:0010119">
    <property type="term" value="P:regulation of stomatal movement"/>
    <property type="evidence" value="ECO:0000315"/>
    <property type="project" value="TAIR"/>
</dbReference>
<dbReference type="GO" id="GO:0009737">
    <property type="term" value="P:response to abscisic acid"/>
    <property type="evidence" value="ECO:0000270"/>
    <property type="project" value="TAIR"/>
</dbReference>
<dbReference type="GO" id="GO:0009733">
    <property type="term" value="P:response to auxin"/>
    <property type="evidence" value="ECO:0000270"/>
    <property type="project" value="TAIR"/>
</dbReference>
<dbReference type="GO" id="GO:0009409">
    <property type="term" value="P:response to cold"/>
    <property type="evidence" value="ECO:0000270"/>
    <property type="project" value="TAIR"/>
</dbReference>
<dbReference type="GO" id="GO:0009826">
    <property type="term" value="P:unidimensional cell growth"/>
    <property type="evidence" value="ECO:0000315"/>
    <property type="project" value="TAIR"/>
</dbReference>
<dbReference type="InterPro" id="IPR039319">
    <property type="entry name" value="ELF3-like"/>
</dbReference>
<dbReference type="PANTHER" id="PTHR34281">
    <property type="entry name" value="PROTEIN EARLY FLOWERING 3"/>
    <property type="match status" value="1"/>
</dbReference>
<dbReference type="PANTHER" id="PTHR34281:SF2">
    <property type="entry name" value="PROTEIN EARLY FLOWERING 3"/>
    <property type="match status" value="1"/>
</dbReference>
<name>ELF3_ARATH</name>
<reference key="1">
    <citation type="journal article" date="1999" name="Gene">
        <title>Isolation of a gene from Arabidopsis thaliana related to nematode feeding structures.</title>
        <authorList>
            <person name="Puzio P.S."/>
            <person name="Lausen J."/>
            <person name="Almeida-Engler J."/>
            <person name="Cai D."/>
            <person name="Gheysen G."/>
            <person name="Grundler F.M.W."/>
        </authorList>
    </citation>
    <scope>NUCLEOTIDE SEQUENCE [MRNA] (ISOFORM 1)</scope>
    <source>
        <strain>cv. C24</strain>
        <tissue>Shoot</tissue>
    </source>
</reference>
<reference key="2">
    <citation type="journal article" date="2001" name="Plant Cell">
        <title>EARLY FLOWERING3 encodes a novel protein that regulates circadian clock function and flowering in Arabidopsis.</title>
        <authorList>
            <person name="Hicks K.A."/>
            <person name="Albertson T.M."/>
            <person name="Wagner D.R."/>
        </authorList>
    </citation>
    <scope>NUCLEOTIDE SEQUENCE (ISOFORM 1)</scope>
    <scope>MUTANT ELF3-7</scope>
    <source>
        <strain>cv. Columbia</strain>
        <strain>cv. Wassilewskija</strain>
    </source>
</reference>
<reference key="3">
    <citation type="journal article" date="1999" name="Nature">
        <title>Sequence and analysis of chromosome 2 of the plant Arabidopsis thaliana.</title>
        <authorList>
            <person name="Lin X."/>
            <person name="Kaul S."/>
            <person name="Rounsley S.D."/>
            <person name="Shea T.P."/>
            <person name="Benito M.-I."/>
            <person name="Town C.D."/>
            <person name="Fujii C.Y."/>
            <person name="Mason T.M."/>
            <person name="Bowman C.L."/>
            <person name="Barnstead M.E."/>
            <person name="Feldblyum T.V."/>
            <person name="Buell C.R."/>
            <person name="Ketchum K.A."/>
            <person name="Lee J.J."/>
            <person name="Ronning C.M."/>
            <person name="Koo H.L."/>
            <person name="Moffat K.S."/>
            <person name="Cronin L.A."/>
            <person name="Shen M."/>
            <person name="Pai G."/>
            <person name="Van Aken S."/>
            <person name="Umayam L."/>
            <person name="Tallon L.J."/>
            <person name="Gill J.E."/>
            <person name="Adams M.D."/>
            <person name="Carrera A.J."/>
            <person name="Creasy T.H."/>
            <person name="Goodman H.M."/>
            <person name="Somerville C.R."/>
            <person name="Copenhaver G.P."/>
            <person name="Preuss D."/>
            <person name="Nierman W.C."/>
            <person name="White O."/>
            <person name="Eisen J.A."/>
            <person name="Salzberg S.L."/>
            <person name="Fraser C.M."/>
            <person name="Venter J.C."/>
        </authorList>
    </citation>
    <scope>NUCLEOTIDE SEQUENCE [LARGE SCALE GENOMIC DNA]</scope>
    <source>
        <strain>cv. Columbia</strain>
    </source>
</reference>
<reference key="4">
    <citation type="journal article" date="2017" name="Plant J.">
        <title>Araport11: a complete reannotation of the Arabidopsis thaliana reference genome.</title>
        <authorList>
            <person name="Cheng C.Y."/>
            <person name="Krishnakumar V."/>
            <person name="Chan A.P."/>
            <person name="Thibaud-Nissen F."/>
            <person name="Schobel S."/>
            <person name="Town C.D."/>
        </authorList>
    </citation>
    <scope>GENOME REANNOTATION</scope>
    <source>
        <strain>cv. Columbia</strain>
    </source>
</reference>
<reference key="5">
    <citation type="journal article" date="2003" name="Science">
        <title>Empirical analysis of transcriptional activity in the Arabidopsis genome.</title>
        <authorList>
            <person name="Yamada K."/>
            <person name="Lim J."/>
            <person name="Dale J.M."/>
            <person name="Chen H."/>
            <person name="Shinn P."/>
            <person name="Palm C.J."/>
            <person name="Southwick A.M."/>
            <person name="Wu H.C."/>
            <person name="Kim C.J."/>
            <person name="Nguyen M."/>
            <person name="Pham P.K."/>
            <person name="Cheuk R.F."/>
            <person name="Karlin-Newmann G."/>
            <person name="Liu S.X."/>
            <person name="Lam B."/>
            <person name="Sakano H."/>
            <person name="Wu T."/>
            <person name="Yu G."/>
            <person name="Miranda M."/>
            <person name="Quach H.L."/>
            <person name="Tripp M."/>
            <person name="Chang C.H."/>
            <person name="Lee J.M."/>
            <person name="Toriumi M.J."/>
            <person name="Chan M.M."/>
            <person name="Tang C.C."/>
            <person name="Onodera C.S."/>
            <person name="Deng J.M."/>
            <person name="Akiyama K."/>
            <person name="Ansari Y."/>
            <person name="Arakawa T."/>
            <person name="Banh J."/>
            <person name="Banno F."/>
            <person name="Bowser L."/>
            <person name="Brooks S.Y."/>
            <person name="Carninci P."/>
            <person name="Chao Q."/>
            <person name="Choy N."/>
            <person name="Enju A."/>
            <person name="Goldsmith A.D."/>
            <person name="Gurjal M."/>
            <person name="Hansen N.F."/>
            <person name="Hayashizaki Y."/>
            <person name="Johnson-Hopson C."/>
            <person name="Hsuan V.W."/>
            <person name="Iida K."/>
            <person name="Karnes M."/>
            <person name="Khan S."/>
            <person name="Koesema E."/>
            <person name="Ishida J."/>
            <person name="Jiang P.X."/>
            <person name="Jones T."/>
            <person name="Kawai J."/>
            <person name="Kamiya A."/>
            <person name="Meyers C."/>
            <person name="Nakajima M."/>
            <person name="Narusaka M."/>
            <person name="Seki M."/>
            <person name="Sakurai T."/>
            <person name="Satou M."/>
            <person name="Tamse R."/>
            <person name="Vaysberg M."/>
            <person name="Wallender E.K."/>
            <person name="Wong C."/>
            <person name="Yamamura Y."/>
            <person name="Yuan S."/>
            <person name="Shinozaki K."/>
            <person name="Davis R.W."/>
            <person name="Theologis A."/>
            <person name="Ecker J.R."/>
        </authorList>
    </citation>
    <scope>NUCLEOTIDE SEQUENCE [LARGE SCALE MRNA] (ISOFORM 2)</scope>
    <source>
        <strain>cv. Columbia</strain>
    </source>
</reference>
<reference key="6">
    <citation type="journal article" date="2001" name="Plant Cell">
        <title>ELF3 encodes a circadian clock-regulated nuclear protein that functions in an Arabidopsis PHYB signal transduction pathway.</title>
        <authorList>
            <person name="Liu X.L."/>
            <person name="Covington M.F."/>
            <person name="Fankhauser C."/>
            <person name="Chory J."/>
            <person name="Wagner D.R."/>
        </authorList>
    </citation>
    <scope>FUNCTION</scope>
</reference>
<reference key="7">
    <citation type="journal article" date="2012" name="Plant Cell">
        <title>EARLY FLOWERING4 recruitment of EARLY FLOWERING3 in the nucleus sustains the Arabidopsis circadian clock.</title>
        <authorList>
            <person name="Herrero E."/>
            <person name="Kolmos E."/>
            <person name="Bujdoso N."/>
            <person name="Yuan Y."/>
            <person name="Wang M."/>
            <person name="Berns M.C."/>
            <person name="Uhlworm H."/>
            <person name="Coupland G."/>
            <person name="Saini R."/>
            <person name="Jaskolski M."/>
            <person name="Webb A."/>
            <person name="Goncalves J."/>
            <person name="Davis S.J."/>
        </authorList>
    </citation>
    <scope>FUNCTION</scope>
    <scope>INTERACTION WITH ELF4</scope>
    <scope>SUBCELLULAR LOCATION</scope>
</reference>
<reference key="8">
    <citation type="journal article" date="2012" name="Plant Signal. Behav.">
        <title>ELF3 recruitment to the PRR9 promoter requires other Evening Complex members in the Arabidopsis circadian clock.</title>
        <authorList>
            <person name="Chow B.Y."/>
            <person name="Helfer A."/>
            <person name="Nusinow D.A."/>
            <person name="Kay S.A."/>
        </authorList>
    </citation>
    <scope>FUNCTION</scope>
</reference>
<comment type="function">
    <text evidence="2 3 4">May be a transcription factor part of a circadian clock input pathway. Acts within a 'zeitnehmer' feedback loop and is involved in its own circadian regulation. Has no role in regulating circadian clock function in the dark. Part of a corepressor complex consisting of ELF4, ELF3, and LUX involved in the transcriptional regulation of APRR9. The activity of the protein may be decreased in long day conditions due to its interaction with phytochrome B (phyB). Can regulate the initiation of flowering independently of phyB. Also involved in responses to nematode parasitism, like the formation of the nematode feeding structure.</text>
</comment>
<comment type="subunit">
    <text evidence="4">Interacts specifically with both Pr and Pfr forms of phytochrome B. Interacts with ELF4. May form a homodimer.</text>
</comment>
<comment type="interaction">
    <interactant intactId="EBI-16415030">
        <id>O82804</id>
    </interactant>
    <interactant intactId="EBI-16415004">
        <id>O04211</id>
        <label>ELF4</label>
    </interactant>
    <organismsDiffer>false</organismsDiffer>
    <experiments>4</experiments>
</comment>
<comment type="subcellular location">
    <subcellularLocation>
        <location evidence="4">Nucleus</location>
    </subcellularLocation>
    <text evidence="4">Forms nuclear bodies.</text>
</comment>
<comment type="alternative products">
    <event type="alternative splicing"/>
    <isoform>
        <id>O82804-1</id>
        <name>1</name>
        <sequence type="displayed"/>
    </isoform>
    <isoform>
        <id>O82804-2</id>
        <name>2</name>
        <sequence type="described" ref="VSP_004042 VSP_004043"/>
    </isoform>
</comment>
<comment type="induction">
    <text>Expressed with a circadian rhythm showing a peak 14 to 16 hours after sunrise regardless of day length. Induced in roots after infection by nematodes. Up-regulated by auxin and cytokinin and down-regulated by abscisic acid and temperature stress.</text>
</comment>
<comment type="sequence caution" evidence="6">
    <conflict type="frameshift">
        <sequence resource="EMBL-CDS" id="CAA72719"/>
    </conflict>
</comment>
<proteinExistence type="evidence at protein level"/>
<gene>
    <name type="primary">ELF3</name>
    <name type="synonym">PYK20</name>
    <name type="ordered locus">At2g25930</name>
    <name type="ORF">F17H15.25</name>
    <name type="ORF">T19L18.26</name>
</gene>
<evidence type="ECO:0000256" key="1">
    <source>
        <dbReference type="SAM" id="MobiDB-lite"/>
    </source>
</evidence>
<evidence type="ECO:0000269" key="2">
    <source>
    </source>
</evidence>
<evidence type="ECO:0000269" key="3">
    <source>
    </source>
</evidence>
<evidence type="ECO:0000269" key="4">
    <source>
    </source>
</evidence>
<evidence type="ECO:0000303" key="5">
    <source>
    </source>
</evidence>
<evidence type="ECO:0000305" key="6"/>
<feature type="chain" id="PRO_0000086953" description="Protein EARLY FLOWERING 3">
    <location>
        <begin position="1"/>
        <end position="695"/>
    </location>
</feature>
<feature type="region of interest" description="Disordered" evidence="1">
    <location>
        <begin position="1"/>
        <end position="33"/>
    </location>
</feature>
<feature type="region of interest" description="Disordered" evidence="1">
    <location>
        <begin position="48"/>
        <end position="75"/>
    </location>
</feature>
<feature type="region of interest" description="Disordered" evidence="1">
    <location>
        <begin position="136"/>
        <end position="159"/>
    </location>
</feature>
<feature type="region of interest" description="Disordered" evidence="1">
    <location>
        <begin position="216"/>
        <end position="283"/>
    </location>
</feature>
<feature type="region of interest" description="Interaction with ELF3">
    <location>
        <begin position="261"/>
        <end position="484"/>
    </location>
</feature>
<feature type="region of interest" description="Disordered" evidence="1">
    <location>
        <begin position="541"/>
        <end position="653"/>
    </location>
</feature>
<feature type="compositionally biased region" description="Basic and acidic residues" evidence="1">
    <location>
        <begin position="1"/>
        <end position="11"/>
    </location>
</feature>
<feature type="compositionally biased region" description="Polar residues" evidence="1">
    <location>
        <begin position="54"/>
        <end position="74"/>
    </location>
</feature>
<feature type="compositionally biased region" description="Basic and acidic residues" evidence="1">
    <location>
        <begin position="216"/>
        <end position="226"/>
    </location>
</feature>
<feature type="compositionally biased region" description="Basic and acidic residues" evidence="1">
    <location>
        <begin position="234"/>
        <end position="253"/>
    </location>
</feature>
<feature type="compositionally biased region" description="Basic and acidic residues" evidence="1">
    <location>
        <begin position="260"/>
        <end position="283"/>
    </location>
</feature>
<feature type="compositionally biased region" description="Polar residues" evidence="1">
    <location>
        <begin position="551"/>
        <end position="567"/>
    </location>
</feature>
<feature type="compositionally biased region" description="Polar residues" evidence="1">
    <location>
        <begin position="579"/>
        <end position="588"/>
    </location>
</feature>
<feature type="compositionally biased region" description="Low complexity" evidence="1">
    <location>
        <begin position="598"/>
        <end position="616"/>
    </location>
</feature>
<feature type="compositionally biased region" description="Low complexity" evidence="1">
    <location>
        <begin position="636"/>
        <end position="653"/>
    </location>
</feature>
<feature type="splice variant" id="VSP_004042" description="In isoform 2." evidence="5">
    <original>N</original>
    <variation>K</variation>
    <location>
        <position position="339"/>
    </location>
</feature>
<feature type="splice variant" id="VSP_004043" description="In isoform 2." evidence="5">
    <location>
        <begin position="340"/>
        <end position="695"/>
    </location>
</feature>
<feature type="sequence variant" description="In strain: cv. Wassilewskija.">
    <original>Q</original>
    <variation>QQQQQQQQQQ</variation>
    <location>
        <position position="550"/>
    </location>
</feature>
<feature type="mutagenesis site" description="In elf3-7; causes early flowering and long hypocotyl phenotypes.">
    <location>
        <begin position="66"/>
        <end position="73"/>
    </location>
</feature>
<feature type="sequence conflict" description="In Ref. 1; CAA72719." evidence="6" ref="1">
    <original>M</original>
    <variation>R</variation>
    <location>
        <position position="55"/>
    </location>
</feature>
<feature type="sequence conflict" description="In Ref. 1; CAA72719." evidence="6" ref="1">
    <original>A</original>
    <variation>R</variation>
    <location>
        <position position="196"/>
    </location>
</feature>
<feature type="sequence conflict" description="In Ref. 1; CAA72719." evidence="6" ref="1">
    <original>R</original>
    <variation>G</variation>
    <location>
        <position position="618"/>
    </location>
</feature>
<feature type="sequence conflict" description="In Ref. 1." evidence="6" ref="1">
    <original>K</original>
    <variation>KVVPHNAK</variation>
    <location>
        <position position="670"/>
    </location>
</feature>
<organism>
    <name type="scientific">Arabidopsis thaliana</name>
    <name type="common">Mouse-ear cress</name>
    <dbReference type="NCBI Taxonomy" id="3702"/>
    <lineage>
        <taxon>Eukaryota</taxon>
        <taxon>Viridiplantae</taxon>
        <taxon>Streptophyta</taxon>
        <taxon>Embryophyta</taxon>
        <taxon>Tracheophyta</taxon>
        <taxon>Spermatophyta</taxon>
        <taxon>Magnoliopsida</taxon>
        <taxon>eudicotyledons</taxon>
        <taxon>Gunneridae</taxon>
        <taxon>Pentapetalae</taxon>
        <taxon>rosids</taxon>
        <taxon>malvids</taxon>
        <taxon>Brassicales</taxon>
        <taxon>Brassicaceae</taxon>
        <taxon>Camelineae</taxon>
        <taxon>Arabidopsis</taxon>
    </lineage>
</organism>
<sequence>MKRGKDEEKILEPMFPRLHVNDADKGGPRAPPRNKMALYEQLSIPSQRFGDHGTMNSRSNNTSTLVHPGPSSQPCGVERNLSVQHLDSSAANQATEKFVSQMSFMENVRSSAQHDQRKMVREEEDFAVPVYINSRRSQSHGRTKSGIEKEKHTPMVAPSSHHSIRFQEVNQTGSKQNVCLATCSKPEVRDQVKANARSGGFVISLDVSVTEEIDLEKSASSHDRVNDYNASLRQESRNRLYRDGGKTRLKDTDNGAESHLATENHSQEGHGSPEDIDNDREYSKSRACASLQQINEEASDDVSDDSMVDSISSIDVSPDDVVGILGQKRFWRARKAIANQQRVFAVQLFELHRLIKVQKLIAASPDLLLDEISFLGKVSAKSYPVKKLLPSEFLVKPPLPHVVVKQRGDSEKTDQHKMESSAENVVGRLSNQGHHQQSNYMPFANNPPASPAPNGYCFPPQPPPSGNHQQWLIPVMSPSEGLIYKPHPGMAHTGHYGGYYGHYMPTPMVMPQYHPGMGFPPPGNGYFPPYGMMPTIMNPYCSSQQQQQQQPNEQMNQFGHPGNLQNTQQQQQRSDNEPAPQQQQQPTKSYPRARKSRQGSTGSSPSGPQGISGSKSFRPFAAVDEDSNINNAPEQTMTTTTTTTRTTVTQTTRDGGGVTRVIKVVPHNAKLASENAARIFQSIQEERKRYDSSKP</sequence>
<keyword id="KW-0025">Alternative splicing</keyword>
<keyword id="KW-0090">Biological rhythms</keyword>
<keyword id="KW-0539">Nucleus</keyword>
<keyword id="KW-0607">Phytochrome signaling pathway</keyword>
<keyword id="KW-1185">Reference proteome</keyword>
<keyword id="KW-0804">Transcription</keyword>
<keyword id="KW-0805">Transcription regulation</keyword>
<accession>O82804</accession>
<accession>O04419</accession>
<accession>Q8L7A2</accession>
<protein>
    <recommendedName>
        <fullName>Protein EARLY FLOWERING 3</fullName>
    </recommendedName>
    <alternativeName>
        <fullName>Nematode-responsive protein</fullName>
    </alternativeName>
</protein>